<protein>
    <recommendedName>
        <fullName evidence="1">Outer-membrane lipoprotein LolB</fullName>
    </recommendedName>
</protein>
<dbReference type="EMBL" id="CP000304">
    <property type="protein sequence ID" value="ABP80823.1"/>
    <property type="molecule type" value="Genomic_DNA"/>
</dbReference>
<dbReference type="RefSeq" id="WP_003284798.1">
    <property type="nucleotide sequence ID" value="NC_009434.1"/>
</dbReference>
<dbReference type="SMR" id="A4VPC2"/>
<dbReference type="KEGG" id="psa:PST_3185"/>
<dbReference type="eggNOG" id="COG3017">
    <property type="taxonomic scope" value="Bacteria"/>
</dbReference>
<dbReference type="HOGENOM" id="CLU_092816_2_1_6"/>
<dbReference type="Proteomes" id="UP000000233">
    <property type="component" value="Chromosome"/>
</dbReference>
<dbReference type="GO" id="GO:0009279">
    <property type="term" value="C:cell outer membrane"/>
    <property type="evidence" value="ECO:0007669"/>
    <property type="project" value="UniProtKB-SubCell"/>
</dbReference>
<dbReference type="GO" id="GO:0044874">
    <property type="term" value="P:lipoprotein localization to outer membrane"/>
    <property type="evidence" value="ECO:0007669"/>
    <property type="project" value="UniProtKB-UniRule"/>
</dbReference>
<dbReference type="GO" id="GO:0015031">
    <property type="term" value="P:protein transport"/>
    <property type="evidence" value="ECO:0007669"/>
    <property type="project" value="UniProtKB-KW"/>
</dbReference>
<dbReference type="CDD" id="cd16326">
    <property type="entry name" value="LolB"/>
    <property type="match status" value="1"/>
</dbReference>
<dbReference type="Gene3D" id="2.50.20.10">
    <property type="entry name" value="Lipoprotein localisation LolA/LolB/LppX"/>
    <property type="match status" value="1"/>
</dbReference>
<dbReference type="HAMAP" id="MF_00233">
    <property type="entry name" value="LolB"/>
    <property type="match status" value="1"/>
</dbReference>
<dbReference type="InterPro" id="IPR029046">
    <property type="entry name" value="LolA/LolB/LppX"/>
</dbReference>
<dbReference type="InterPro" id="IPR004565">
    <property type="entry name" value="OM_lipoprot_LolB"/>
</dbReference>
<dbReference type="NCBIfam" id="TIGR00548">
    <property type="entry name" value="lolB"/>
    <property type="match status" value="1"/>
</dbReference>
<dbReference type="Pfam" id="PF03550">
    <property type="entry name" value="LolB"/>
    <property type="match status" value="1"/>
</dbReference>
<dbReference type="SUPFAM" id="SSF89392">
    <property type="entry name" value="Prokaryotic lipoproteins and lipoprotein localization factors"/>
    <property type="match status" value="1"/>
</dbReference>
<dbReference type="PROSITE" id="PS51257">
    <property type="entry name" value="PROKAR_LIPOPROTEIN"/>
    <property type="match status" value="1"/>
</dbReference>
<comment type="function">
    <text evidence="1">Plays a critical role in the incorporation of lipoproteins in the outer membrane after they are released by the LolA protein.</text>
</comment>
<comment type="subunit">
    <text evidence="1">Monomer.</text>
</comment>
<comment type="subcellular location">
    <subcellularLocation>
        <location evidence="1">Cell outer membrane</location>
        <topology evidence="1">Lipid-anchor</topology>
    </subcellularLocation>
</comment>
<comment type="similarity">
    <text evidence="1">Belongs to the LolB family.</text>
</comment>
<organism>
    <name type="scientific">Stutzerimonas stutzeri (strain A1501)</name>
    <name type="common">Pseudomonas stutzeri</name>
    <dbReference type="NCBI Taxonomy" id="379731"/>
    <lineage>
        <taxon>Bacteria</taxon>
        <taxon>Pseudomonadati</taxon>
        <taxon>Pseudomonadota</taxon>
        <taxon>Gammaproteobacteria</taxon>
        <taxon>Pseudomonadales</taxon>
        <taxon>Pseudomonadaceae</taxon>
        <taxon>Stutzerimonas</taxon>
    </lineage>
</organism>
<sequence length="206" mass="22797">MSLLKNLLAPCLALLLAGCAALGPHESVEGPGNTAAWKEHRSHVATLDGWQISGKIGIRAPQESGSGTLFWLQRQDYFDIRLSGPLGRGATRLTGRPDAVSLEVAGQGRFEAESPEALVEAQLGWQLPVSHLLWWVRGLPAPDSRSRLSIDSESRLARLEQDGWQVEYLAYAEHNGFVLPERIRLQGHDLQITLVIKDWQPRQLGR</sequence>
<accession>A4VPC2</accession>
<feature type="signal peptide" evidence="1">
    <location>
        <begin position="1"/>
        <end position="18"/>
    </location>
</feature>
<feature type="chain" id="PRO_0000336615" description="Outer-membrane lipoprotein LolB">
    <location>
        <begin position="19"/>
        <end position="206"/>
    </location>
</feature>
<feature type="lipid moiety-binding region" description="N-palmitoyl cysteine" evidence="1">
    <location>
        <position position="19"/>
    </location>
</feature>
<feature type="lipid moiety-binding region" description="S-diacylglycerol cysteine" evidence="1">
    <location>
        <position position="19"/>
    </location>
</feature>
<name>LOLB_STUS1</name>
<reference key="1">
    <citation type="journal article" date="2008" name="Proc. Natl. Acad. Sci. U.S.A.">
        <title>Nitrogen fixation island and rhizosphere competence traits in the genome of root-associated Pseudomonas stutzeri A1501.</title>
        <authorList>
            <person name="Yan Y."/>
            <person name="Yang J."/>
            <person name="Dou Y."/>
            <person name="Chen M."/>
            <person name="Ping S."/>
            <person name="Peng J."/>
            <person name="Lu W."/>
            <person name="Zhang W."/>
            <person name="Yao Z."/>
            <person name="Li H."/>
            <person name="Liu W."/>
            <person name="He S."/>
            <person name="Geng L."/>
            <person name="Zhang X."/>
            <person name="Yang F."/>
            <person name="Yu H."/>
            <person name="Zhan Y."/>
            <person name="Li D."/>
            <person name="Lin Z."/>
            <person name="Wang Y."/>
            <person name="Elmerich C."/>
            <person name="Lin M."/>
            <person name="Jin Q."/>
        </authorList>
    </citation>
    <scope>NUCLEOTIDE SEQUENCE [LARGE SCALE GENOMIC DNA]</scope>
    <source>
        <strain>A1501</strain>
    </source>
</reference>
<proteinExistence type="inferred from homology"/>
<keyword id="KW-0998">Cell outer membrane</keyword>
<keyword id="KW-0143">Chaperone</keyword>
<keyword id="KW-0449">Lipoprotein</keyword>
<keyword id="KW-0472">Membrane</keyword>
<keyword id="KW-0564">Palmitate</keyword>
<keyword id="KW-0653">Protein transport</keyword>
<keyword id="KW-1185">Reference proteome</keyword>
<keyword id="KW-0732">Signal</keyword>
<keyword id="KW-0813">Transport</keyword>
<gene>
    <name evidence="1" type="primary">lolB</name>
    <name type="ordered locus">PST_3185</name>
</gene>
<evidence type="ECO:0000255" key="1">
    <source>
        <dbReference type="HAMAP-Rule" id="MF_00233"/>
    </source>
</evidence>